<evidence type="ECO:0000250" key="1">
    <source>
        <dbReference type="UniProtKB" id="P47224"/>
    </source>
</evidence>
<evidence type="ECO:0000255" key="2">
    <source>
        <dbReference type="PROSITE-ProRule" id="PRU01132"/>
    </source>
</evidence>
<evidence type="ECO:0000305" key="3"/>
<evidence type="ECO:0000312" key="4">
    <source>
        <dbReference type="MGI" id="MGI:2138605"/>
    </source>
</evidence>
<name>MSS4_MOUSE</name>
<comment type="function">
    <text evidence="1">Guanine-nucleotide-releasing protein that acts on members of the SEC4/YPT1/RAB subfamily. Stimulates GDP release from both YPT1, RAB3A and RAB10, but is less active on these proteins than on the SEC4 protein. Might play a general role in vesicular transport (By similarity).</text>
</comment>
<comment type="subunit">
    <text evidence="1">Interacts with RAB8A.</text>
</comment>
<comment type="similarity">
    <text evidence="2">Belongs to the DSS4/MSS4 family.</text>
</comment>
<organism>
    <name type="scientific">Mus musculus</name>
    <name type="common">Mouse</name>
    <dbReference type="NCBI Taxonomy" id="10090"/>
    <lineage>
        <taxon>Eukaryota</taxon>
        <taxon>Metazoa</taxon>
        <taxon>Chordata</taxon>
        <taxon>Craniata</taxon>
        <taxon>Vertebrata</taxon>
        <taxon>Euteleostomi</taxon>
        <taxon>Mammalia</taxon>
        <taxon>Eutheria</taxon>
        <taxon>Euarchontoglires</taxon>
        <taxon>Glires</taxon>
        <taxon>Rodentia</taxon>
        <taxon>Myomorpha</taxon>
        <taxon>Muroidea</taxon>
        <taxon>Muridae</taxon>
        <taxon>Murinae</taxon>
        <taxon>Mus</taxon>
        <taxon>Mus</taxon>
    </lineage>
</organism>
<protein>
    <recommendedName>
        <fullName evidence="3">Guanine nucleotide exchange factor MSS4</fullName>
    </recommendedName>
    <alternativeName>
        <fullName>Rab-interacting factor</fullName>
    </alternativeName>
</protein>
<accession>Q91X96</accession>
<accession>Q3U2X4</accession>
<gene>
    <name evidence="4" type="primary">Rabif</name>
</gene>
<feature type="chain" id="PRO_0000174175" description="Guanine nucleotide exchange factor MSS4">
    <location>
        <begin position="1"/>
        <end position="123"/>
    </location>
</feature>
<feature type="domain" description="MSS4" evidence="2">
    <location>
        <begin position="9"/>
        <end position="123"/>
    </location>
</feature>
<feature type="binding site" evidence="2">
    <location>
        <position position="23"/>
    </location>
    <ligand>
        <name>Zn(2+)</name>
        <dbReference type="ChEBI" id="CHEBI:29105"/>
    </ligand>
</feature>
<feature type="binding site" evidence="2">
    <location>
        <position position="26"/>
    </location>
    <ligand>
        <name>Zn(2+)</name>
        <dbReference type="ChEBI" id="CHEBI:29105"/>
    </ligand>
</feature>
<feature type="binding site" evidence="2">
    <location>
        <position position="94"/>
    </location>
    <ligand>
        <name>Zn(2+)</name>
        <dbReference type="ChEBI" id="CHEBI:29105"/>
    </ligand>
</feature>
<feature type="binding site" evidence="2">
    <location>
        <position position="97"/>
    </location>
    <ligand>
        <name>Zn(2+)</name>
        <dbReference type="ChEBI" id="CHEBI:29105"/>
    </ligand>
</feature>
<feature type="modified residue" description="N-acetylmethionine" evidence="1">
    <location>
        <position position="1"/>
    </location>
</feature>
<dbReference type="EMBL" id="AK087547">
    <property type="protein sequence ID" value="BAC39922.1"/>
    <property type="molecule type" value="mRNA"/>
</dbReference>
<dbReference type="EMBL" id="AK133528">
    <property type="protein sequence ID" value="BAE21707.1"/>
    <property type="molecule type" value="mRNA"/>
</dbReference>
<dbReference type="EMBL" id="AK155054">
    <property type="protein sequence ID" value="BAE33016.1"/>
    <property type="molecule type" value="mRNA"/>
</dbReference>
<dbReference type="EMBL" id="AK158129">
    <property type="protein sequence ID" value="BAE34373.1"/>
    <property type="molecule type" value="mRNA"/>
</dbReference>
<dbReference type="EMBL" id="AK165748">
    <property type="protein sequence ID" value="BAE38365.1"/>
    <property type="molecule type" value="mRNA"/>
</dbReference>
<dbReference type="EMBL" id="BC011166">
    <property type="protein sequence ID" value="AAH11166.1"/>
    <property type="molecule type" value="mRNA"/>
</dbReference>
<dbReference type="EMBL" id="BC024808">
    <property type="protein sequence ID" value="AAH24808.1"/>
    <property type="molecule type" value="mRNA"/>
</dbReference>
<dbReference type="CCDS" id="CCDS15310.1"/>
<dbReference type="RefSeq" id="NP_663485.1">
    <property type="nucleotide sequence ID" value="NM_145510.2"/>
</dbReference>
<dbReference type="SMR" id="Q91X96"/>
<dbReference type="BioGRID" id="221108">
    <property type="interactions" value="1"/>
</dbReference>
<dbReference type="CORUM" id="Q91X96"/>
<dbReference type="FunCoup" id="Q91X96">
    <property type="interactions" value="1774"/>
</dbReference>
<dbReference type="IntAct" id="Q91X96">
    <property type="interactions" value="1"/>
</dbReference>
<dbReference type="STRING" id="10090.ENSMUSP00000038335"/>
<dbReference type="PhosphoSitePlus" id="Q91X96"/>
<dbReference type="SwissPalm" id="Q91X96"/>
<dbReference type="PaxDb" id="10090-ENSMUSP00000038335"/>
<dbReference type="PeptideAtlas" id="Q91X96"/>
<dbReference type="ProteomicsDB" id="290065"/>
<dbReference type="Pumba" id="Q91X96"/>
<dbReference type="Antibodypedia" id="34532">
    <property type="antibodies" value="103 antibodies from 26 providers"/>
</dbReference>
<dbReference type="DNASU" id="98710"/>
<dbReference type="Ensembl" id="ENSMUST00000047978.9">
    <property type="protein sequence ID" value="ENSMUSP00000038335.8"/>
    <property type="gene ID" value="ENSMUSG00000042229.10"/>
</dbReference>
<dbReference type="GeneID" id="98710"/>
<dbReference type="KEGG" id="mmu:98710"/>
<dbReference type="UCSC" id="uc007csc.1">
    <property type="organism name" value="mouse"/>
</dbReference>
<dbReference type="AGR" id="MGI:2138605"/>
<dbReference type="CTD" id="5877"/>
<dbReference type="MGI" id="MGI:2138605">
    <property type="gene designation" value="Rabif"/>
</dbReference>
<dbReference type="VEuPathDB" id="HostDB:ENSMUSG00000042229"/>
<dbReference type="eggNOG" id="KOG4113">
    <property type="taxonomic scope" value="Eukaryota"/>
</dbReference>
<dbReference type="GeneTree" id="ENSGT00390000016889"/>
<dbReference type="HOGENOM" id="CLU_132754_0_0_1"/>
<dbReference type="InParanoid" id="Q91X96"/>
<dbReference type="OMA" id="VPLMMQK"/>
<dbReference type="OrthoDB" id="30840at2759"/>
<dbReference type="PhylomeDB" id="Q91X96"/>
<dbReference type="TreeFam" id="TF314029"/>
<dbReference type="BioGRID-ORCS" id="98710">
    <property type="hits" value="14 hits in 81 CRISPR screens"/>
</dbReference>
<dbReference type="ChiTaRS" id="Rabif">
    <property type="organism name" value="mouse"/>
</dbReference>
<dbReference type="PRO" id="PR:Q91X96"/>
<dbReference type="Proteomes" id="UP000000589">
    <property type="component" value="Chromosome 1"/>
</dbReference>
<dbReference type="RNAct" id="Q91X96">
    <property type="molecule type" value="protein"/>
</dbReference>
<dbReference type="Bgee" id="ENSMUSG00000042229">
    <property type="expression patterns" value="Expressed in tail skin and 253 other cell types or tissues"/>
</dbReference>
<dbReference type="GO" id="GO:0005085">
    <property type="term" value="F:guanyl-nucleotide exchange factor activity"/>
    <property type="evidence" value="ECO:0007669"/>
    <property type="project" value="UniProtKB-KW"/>
</dbReference>
<dbReference type="GO" id="GO:0008270">
    <property type="term" value="F:zinc ion binding"/>
    <property type="evidence" value="ECO:0000250"/>
    <property type="project" value="UniProtKB"/>
</dbReference>
<dbReference type="GO" id="GO:0015031">
    <property type="term" value="P:protein transport"/>
    <property type="evidence" value="ECO:0007669"/>
    <property type="project" value="UniProtKB-KW"/>
</dbReference>
<dbReference type="GO" id="GO:0007264">
    <property type="term" value="P:small GTPase-mediated signal transduction"/>
    <property type="evidence" value="ECO:0007669"/>
    <property type="project" value="InterPro"/>
</dbReference>
<dbReference type="CDD" id="cd00246">
    <property type="entry name" value="RabGEF"/>
    <property type="match status" value="1"/>
</dbReference>
<dbReference type="FunFam" id="2.170.150.10:FF:000004">
    <property type="entry name" value="Guanine nucleotide exchange factor MSS4"/>
    <property type="match status" value="1"/>
</dbReference>
<dbReference type="Gene3D" id="2.170.150.10">
    <property type="entry name" value="Metal Binding Protein, Guanine Nucleotide Exchange Factor, Chain A"/>
    <property type="match status" value="1"/>
</dbReference>
<dbReference type="InterPro" id="IPR007515">
    <property type="entry name" value="Mss4"/>
</dbReference>
<dbReference type="InterPro" id="IPR011057">
    <property type="entry name" value="Mss4-like_sf"/>
</dbReference>
<dbReference type="InterPro" id="IPR011323">
    <property type="entry name" value="Mss4/transl-control_tumour"/>
</dbReference>
<dbReference type="PANTHER" id="PTHR13276">
    <property type="entry name" value="GUANINE NUCLEOTIDE EXCHANGE FACTOR MSS4"/>
    <property type="match status" value="1"/>
</dbReference>
<dbReference type="PANTHER" id="PTHR13276:SF0">
    <property type="entry name" value="GUANINE NUCLEOTIDE EXCHANGE FACTOR MSS4"/>
    <property type="match status" value="1"/>
</dbReference>
<dbReference type="Pfam" id="PF04421">
    <property type="entry name" value="Mss4"/>
    <property type="match status" value="1"/>
</dbReference>
<dbReference type="SUPFAM" id="SSF51316">
    <property type="entry name" value="Mss4-like"/>
    <property type="match status" value="1"/>
</dbReference>
<dbReference type="PROSITE" id="PS51796">
    <property type="entry name" value="MSS4"/>
    <property type="match status" value="1"/>
</dbReference>
<sequence>MEPCELQNELVSAEGRNRKAVLCQRCGSRVLQPGTALFSRRQLFLPSMRKKPDLADGSNPDGDLLQEHWLVNDMFTFENVGFTKDVGNIKFLVCADCEIGPIGWHCLDDKNSFYVALERVSHE</sequence>
<keyword id="KW-0007">Acetylation</keyword>
<keyword id="KW-0344">Guanine-nucleotide releasing factor</keyword>
<keyword id="KW-0479">Metal-binding</keyword>
<keyword id="KW-0653">Protein transport</keyword>
<keyword id="KW-1185">Reference proteome</keyword>
<keyword id="KW-0813">Transport</keyword>
<keyword id="KW-0862">Zinc</keyword>
<reference key="1">
    <citation type="journal article" date="2005" name="Science">
        <title>The transcriptional landscape of the mammalian genome.</title>
        <authorList>
            <person name="Carninci P."/>
            <person name="Kasukawa T."/>
            <person name="Katayama S."/>
            <person name="Gough J."/>
            <person name="Frith M.C."/>
            <person name="Maeda N."/>
            <person name="Oyama R."/>
            <person name="Ravasi T."/>
            <person name="Lenhard B."/>
            <person name="Wells C."/>
            <person name="Kodzius R."/>
            <person name="Shimokawa K."/>
            <person name="Bajic V.B."/>
            <person name="Brenner S.E."/>
            <person name="Batalov S."/>
            <person name="Forrest A.R."/>
            <person name="Zavolan M."/>
            <person name="Davis M.J."/>
            <person name="Wilming L.G."/>
            <person name="Aidinis V."/>
            <person name="Allen J.E."/>
            <person name="Ambesi-Impiombato A."/>
            <person name="Apweiler R."/>
            <person name="Aturaliya R.N."/>
            <person name="Bailey T.L."/>
            <person name="Bansal M."/>
            <person name="Baxter L."/>
            <person name="Beisel K.W."/>
            <person name="Bersano T."/>
            <person name="Bono H."/>
            <person name="Chalk A.M."/>
            <person name="Chiu K.P."/>
            <person name="Choudhary V."/>
            <person name="Christoffels A."/>
            <person name="Clutterbuck D.R."/>
            <person name="Crowe M.L."/>
            <person name="Dalla E."/>
            <person name="Dalrymple B.P."/>
            <person name="de Bono B."/>
            <person name="Della Gatta G."/>
            <person name="di Bernardo D."/>
            <person name="Down T."/>
            <person name="Engstrom P."/>
            <person name="Fagiolini M."/>
            <person name="Faulkner G."/>
            <person name="Fletcher C.F."/>
            <person name="Fukushima T."/>
            <person name="Furuno M."/>
            <person name="Futaki S."/>
            <person name="Gariboldi M."/>
            <person name="Georgii-Hemming P."/>
            <person name="Gingeras T.R."/>
            <person name="Gojobori T."/>
            <person name="Green R.E."/>
            <person name="Gustincich S."/>
            <person name="Harbers M."/>
            <person name="Hayashi Y."/>
            <person name="Hensch T.K."/>
            <person name="Hirokawa N."/>
            <person name="Hill D."/>
            <person name="Huminiecki L."/>
            <person name="Iacono M."/>
            <person name="Ikeo K."/>
            <person name="Iwama A."/>
            <person name="Ishikawa T."/>
            <person name="Jakt M."/>
            <person name="Kanapin A."/>
            <person name="Katoh M."/>
            <person name="Kawasawa Y."/>
            <person name="Kelso J."/>
            <person name="Kitamura H."/>
            <person name="Kitano H."/>
            <person name="Kollias G."/>
            <person name="Krishnan S.P."/>
            <person name="Kruger A."/>
            <person name="Kummerfeld S.K."/>
            <person name="Kurochkin I.V."/>
            <person name="Lareau L.F."/>
            <person name="Lazarevic D."/>
            <person name="Lipovich L."/>
            <person name="Liu J."/>
            <person name="Liuni S."/>
            <person name="McWilliam S."/>
            <person name="Madan Babu M."/>
            <person name="Madera M."/>
            <person name="Marchionni L."/>
            <person name="Matsuda H."/>
            <person name="Matsuzawa S."/>
            <person name="Miki H."/>
            <person name="Mignone F."/>
            <person name="Miyake S."/>
            <person name="Morris K."/>
            <person name="Mottagui-Tabar S."/>
            <person name="Mulder N."/>
            <person name="Nakano N."/>
            <person name="Nakauchi H."/>
            <person name="Ng P."/>
            <person name="Nilsson R."/>
            <person name="Nishiguchi S."/>
            <person name="Nishikawa S."/>
            <person name="Nori F."/>
            <person name="Ohara O."/>
            <person name="Okazaki Y."/>
            <person name="Orlando V."/>
            <person name="Pang K.C."/>
            <person name="Pavan W.J."/>
            <person name="Pavesi G."/>
            <person name="Pesole G."/>
            <person name="Petrovsky N."/>
            <person name="Piazza S."/>
            <person name="Reed J."/>
            <person name="Reid J.F."/>
            <person name="Ring B.Z."/>
            <person name="Ringwald M."/>
            <person name="Rost B."/>
            <person name="Ruan Y."/>
            <person name="Salzberg S.L."/>
            <person name="Sandelin A."/>
            <person name="Schneider C."/>
            <person name="Schoenbach C."/>
            <person name="Sekiguchi K."/>
            <person name="Semple C.A."/>
            <person name="Seno S."/>
            <person name="Sessa L."/>
            <person name="Sheng Y."/>
            <person name="Shibata Y."/>
            <person name="Shimada H."/>
            <person name="Shimada K."/>
            <person name="Silva D."/>
            <person name="Sinclair B."/>
            <person name="Sperling S."/>
            <person name="Stupka E."/>
            <person name="Sugiura K."/>
            <person name="Sultana R."/>
            <person name="Takenaka Y."/>
            <person name="Taki K."/>
            <person name="Tammoja K."/>
            <person name="Tan S.L."/>
            <person name="Tang S."/>
            <person name="Taylor M.S."/>
            <person name="Tegner J."/>
            <person name="Teichmann S.A."/>
            <person name="Ueda H.R."/>
            <person name="van Nimwegen E."/>
            <person name="Verardo R."/>
            <person name="Wei C.L."/>
            <person name="Yagi K."/>
            <person name="Yamanishi H."/>
            <person name="Zabarovsky E."/>
            <person name="Zhu S."/>
            <person name="Zimmer A."/>
            <person name="Hide W."/>
            <person name="Bult C."/>
            <person name="Grimmond S.M."/>
            <person name="Teasdale R.D."/>
            <person name="Liu E.T."/>
            <person name="Brusic V."/>
            <person name="Quackenbush J."/>
            <person name="Wahlestedt C."/>
            <person name="Mattick J.S."/>
            <person name="Hume D.A."/>
            <person name="Kai C."/>
            <person name="Sasaki D."/>
            <person name="Tomaru Y."/>
            <person name="Fukuda S."/>
            <person name="Kanamori-Katayama M."/>
            <person name="Suzuki M."/>
            <person name="Aoki J."/>
            <person name="Arakawa T."/>
            <person name="Iida J."/>
            <person name="Imamura K."/>
            <person name="Itoh M."/>
            <person name="Kato T."/>
            <person name="Kawaji H."/>
            <person name="Kawagashira N."/>
            <person name="Kawashima T."/>
            <person name="Kojima M."/>
            <person name="Kondo S."/>
            <person name="Konno H."/>
            <person name="Nakano K."/>
            <person name="Ninomiya N."/>
            <person name="Nishio T."/>
            <person name="Okada M."/>
            <person name="Plessy C."/>
            <person name="Shibata K."/>
            <person name="Shiraki T."/>
            <person name="Suzuki S."/>
            <person name="Tagami M."/>
            <person name="Waki K."/>
            <person name="Watahiki A."/>
            <person name="Okamura-Oho Y."/>
            <person name="Suzuki H."/>
            <person name="Kawai J."/>
            <person name="Hayashizaki Y."/>
        </authorList>
    </citation>
    <scope>NUCLEOTIDE SEQUENCE [LARGE SCALE MRNA]</scope>
    <source>
        <strain>C57BL/6J</strain>
        <strain>NOD</strain>
        <tissue>Brain</tissue>
        <tissue>Eye</tissue>
        <tissue>Inner ear</tissue>
        <tissue>Ovary</tissue>
    </source>
</reference>
<reference key="2">
    <citation type="journal article" date="2004" name="Genome Res.">
        <title>The status, quality, and expansion of the NIH full-length cDNA project: the Mammalian Gene Collection (MGC).</title>
        <authorList>
            <consortium name="The MGC Project Team"/>
        </authorList>
    </citation>
    <scope>NUCLEOTIDE SEQUENCE [LARGE SCALE MRNA]</scope>
    <source>
        <strain>C57BL/6J</strain>
        <tissue>Colon</tissue>
        <tissue>Retina</tissue>
    </source>
</reference>
<reference key="3">
    <citation type="journal article" date="2010" name="Cell">
        <title>A tissue-specific atlas of mouse protein phosphorylation and expression.</title>
        <authorList>
            <person name="Huttlin E.L."/>
            <person name="Jedrychowski M.P."/>
            <person name="Elias J.E."/>
            <person name="Goswami T."/>
            <person name="Rad R."/>
            <person name="Beausoleil S.A."/>
            <person name="Villen J."/>
            <person name="Haas W."/>
            <person name="Sowa M.E."/>
            <person name="Gygi S.P."/>
        </authorList>
    </citation>
    <scope>IDENTIFICATION BY MASS SPECTROMETRY [LARGE SCALE ANALYSIS]</scope>
    <source>
        <tissue>Brain</tissue>
        <tissue>Liver</tissue>
        <tissue>Testis</tissue>
    </source>
</reference>
<proteinExistence type="evidence at protein level"/>